<reference key="1">
    <citation type="journal article" date="1999" name="Nature">
        <title>Sequence and analysis of chromosome 2 of the plant Arabidopsis thaliana.</title>
        <authorList>
            <person name="Lin X."/>
            <person name="Kaul S."/>
            <person name="Rounsley S.D."/>
            <person name="Shea T.P."/>
            <person name="Benito M.-I."/>
            <person name="Town C.D."/>
            <person name="Fujii C.Y."/>
            <person name="Mason T.M."/>
            <person name="Bowman C.L."/>
            <person name="Barnstead M.E."/>
            <person name="Feldblyum T.V."/>
            <person name="Buell C.R."/>
            <person name="Ketchum K.A."/>
            <person name="Lee J.J."/>
            <person name="Ronning C.M."/>
            <person name="Koo H.L."/>
            <person name="Moffat K.S."/>
            <person name="Cronin L.A."/>
            <person name="Shen M."/>
            <person name="Pai G."/>
            <person name="Van Aken S."/>
            <person name="Umayam L."/>
            <person name="Tallon L.J."/>
            <person name="Gill J.E."/>
            <person name="Adams M.D."/>
            <person name="Carrera A.J."/>
            <person name="Creasy T.H."/>
            <person name="Goodman H.M."/>
            <person name="Somerville C.R."/>
            <person name="Copenhaver G.P."/>
            <person name="Preuss D."/>
            <person name="Nierman W.C."/>
            <person name="White O."/>
            <person name="Eisen J.A."/>
            <person name="Salzberg S.L."/>
            <person name="Fraser C.M."/>
            <person name="Venter J.C."/>
        </authorList>
    </citation>
    <scope>NUCLEOTIDE SEQUENCE [LARGE SCALE GENOMIC DNA]</scope>
    <source>
        <strain>cv. Columbia</strain>
    </source>
</reference>
<reference key="2">
    <citation type="journal article" date="2017" name="Plant J.">
        <title>Araport11: a complete reannotation of the Arabidopsis thaliana reference genome.</title>
        <authorList>
            <person name="Cheng C.Y."/>
            <person name="Krishnakumar V."/>
            <person name="Chan A.P."/>
            <person name="Thibaud-Nissen F."/>
            <person name="Schobel S."/>
            <person name="Town C.D."/>
        </authorList>
    </citation>
    <scope>GENOME REANNOTATION</scope>
    <source>
        <strain>cv. Columbia</strain>
    </source>
</reference>
<reference key="3">
    <citation type="journal article" date="2003" name="Science">
        <title>Empirical analysis of transcriptional activity in the Arabidopsis genome.</title>
        <authorList>
            <person name="Yamada K."/>
            <person name="Lim J."/>
            <person name="Dale J.M."/>
            <person name="Chen H."/>
            <person name="Shinn P."/>
            <person name="Palm C.J."/>
            <person name="Southwick A.M."/>
            <person name="Wu H.C."/>
            <person name="Kim C.J."/>
            <person name="Nguyen M."/>
            <person name="Pham P.K."/>
            <person name="Cheuk R.F."/>
            <person name="Karlin-Newmann G."/>
            <person name="Liu S.X."/>
            <person name="Lam B."/>
            <person name="Sakano H."/>
            <person name="Wu T."/>
            <person name="Yu G."/>
            <person name="Miranda M."/>
            <person name="Quach H.L."/>
            <person name="Tripp M."/>
            <person name="Chang C.H."/>
            <person name="Lee J.M."/>
            <person name="Toriumi M.J."/>
            <person name="Chan M.M."/>
            <person name="Tang C.C."/>
            <person name="Onodera C.S."/>
            <person name="Deng J.M."/>
            <person name="Akiyama K."/>
            <person name="Ansari Y."/>
            <person name="Arakawa T."/>
            <person name="Banh J."/>
            <person name="Banno F."/>
            <person name="Bowser L."/>
            <person name="Brooks S.Y."/>
            <person name="Carninci P."/>
            <person name="Chao Q."/>
            <person name="Choy N."/>
            <person name="Enju A."/>
            <person name="Goldsmith A.D."/>
            <person name="Gurjal M."/>
            <person name="Hansen N.F."/>
            <person name="Hayashizaki Y."/>
            <person name="Johnson-Hopson C."/>
            <person name="Hsuan V.W."/>
            <person name="Iida K."/>
            <person name="Karnes M."/>
            <person name="Khan S."/>
            <person name="Koesema E."/>
            <person name="Ishida J."/>
            <person name="Jiang P.X."/>
            <person name="Jones T."/>
            <person name="Kawai J."/>
            <person name="Kamiya A."/>
            <person name="Meyers C."/>
            <person name="Nakajima M."/>
            <person name="Narusaka M."/>
            <person name="Seki M."/>
            <person name="Sakurai T."/>
            <person name="Satou M."/>
            <person name="Tamse R."/>
            <person name="Vaysberg M."/>
            <person name="Wallender E.K."/>
            <person name="Wong C."/>
            <person name="Yamamura Y."/>
            <person name="Yuan S."/>
            <person name="Shinozaki K."/>
            <person name="Davis R.W."/>
            <person name="Theologis A."/>
            <person name="Ecker J.R."/>
        </authorList>
    </citation>
    <scope>NUCLEOTIDE SEQUENCE [LARGE SCALE MRNA]</scope>
    <source>
        <strain>cv. Columbia</strain>
    </source>
</reference>
<reference key="4">
    <citation type="journal article" date="2001" name="Gene">
        <title>Regulation of the CCAAT-binding NF-Y subunits in Arabidopsis thaliana.</title>
        <authorList>
            <person name="Gusmaroli G."/>
            <person name="Tonelli C."/>
            <person name="Mantovani R."/>
        </authorList>
    </citation>
    <scope>TISSUE SPECIFICITY</scope>
</reference>
<reference key="5">
    <citation type="journal article" date="2002" name="Gene">
        <title>Regulation of novel members of the Arabidopsis thaliana CCAAT-binding nuclear factor Y subunits.</title>
        <authorList>
            <person name="Gusmaroli G."/>
            <person name="Tonelli C."/>
            <person name="Mantovani R."/>
        </authorList>
    </citation>
    <scope>GENE FAMILY</scope>
    <scope>NOMENCLATURE</scope>
</reference>
<organism>
    <name type="scientific">Arabidopsis thaliana</name>
    <name type="common">Mouse-ear cress</name>
    <dbReference type="NCBI Taxonomy" id="3702"/>
    <lineage>
        <taxon>Eukaryota</taxon>
        <taxon>Viridiplantae</taxon>
        <taxon>Streptophyta</taxon>
        <taxon>Embryophyta</taxon>
        <taxon>Tracheophyta</taxon>
        <taxon>Spermatophyta</taxon>
        <taxon>Magnoliopsida</taxon>
        <taxon>eudicotyledons</taxon>
        <taxon>Gunneridae</taxon>
        <taxon>Pentapetalae</taxon>
        <taxon>rosids</taxon>
        <taxon>malvids</taxon>
        <taxon>Brassicales</taxon>
        <taxon>Brassicaceae</taxon>
        <taxon>Camelineae</taxon>
        <taxon>Arabidopsis</taxon>
    </lineage>
</organism>
<comment type="function">
    <text>Component of the NF-Y/HAP transcription factor complex. The NF-Y complex stimulates the transcription of various genes by recognizing and binding to a CCAAT motif in promoters.</text>
</comment>
<comment type="subunit">
    <text evidence="1">Heterotrimeric transcription factor composed of three components, NF-YA, NF-YB and NF-YC. NF-YB and NF-YC must interact and dimerize for NF-YA association and DNA binding (By similarity).</text>
</comment>
<comment type="interaction">
    <interactant intactId="EBI-2475759">
        <id>O82248</id>
    </interactant>
    <interactant intactId="EBI-15191737">
        <id>Q58CM8</id>
        <label>NFYC10</label>
    </interactant>
    <organismsDiffer>false</organismsDiffer>
    <experiments>3</experiments>
</comment>
<comment type="interaction">
    <interactant intactId="EBI-2475759">
        <id>O82248</id>
    </interactant>
    <interactant intactId="EBI-15191571">
        <id>Q4PSE2</id>
        <label>NFYC8</label>
    </interactant>
    <organismsDiffer>false</organismsDiffer>
    <experiments>3</experiments>
</comment>
<comment type="interaction">
    <interactant intactId="EBI-2475759">
        <id>O82248</id>
    </interactant>
    <interactant intactId="EBI-2466050">
        <id>Q8L4B2</id>
        <label>NFYC9</label>
    </interactant>
    <organismsDiffer>false</organismsDiffer>
    <experiments>3</experiments>
</comment>
<comment type="subcellular location">
    <subcellularLocation>
        <location evidence="3">Nucleus</location>
    </subcellularLocation>
</comment>
<comment type="tissue specificity">
    <text evidence="2">Expressed in flowers and siliques.</text>
</comment>
<comment type="similarity">
    <text evidence="3">Belongs to the NFYB/HAP3 subunit family.</text>
</comment>
<keyword id="KW-0010">Activator</keyword>
<keyword id="KW-0238">DNA-binding</keyword>
<keyword id="KW-0539">Nucleus</keyword>
<keyword id="KW-1185">Reference proteome</keyword>
<keyword id="KW-0804">Transcription</keyword>
<keyword id="KW-0805">Transcription regulation</keyword>
<gene>
    <name type="primary">NFYB5</name>
    <name type="ordered locus">At2g47810</name>
    <name type="ORF">F17A22.20</name>
</gene>
<sequence length="160" mass="18122">MAGNYHSFQNPIPRYQNYNFGSSSSNHQHEHDGLVVVVEDQQQEESMMVKEQDRLLPIANVGRIMKNILPANAKVSKEAKETMQECVSEFISFVTGEASDKCHKEKRKTVNGDDICWAMANLGFDDYAAQLKKYLHRYRVLEGEKPNHHGKGGPKSSPDN</sequence>
<protein>
    <recommendedName>
        <fullName>Nuclear transcription factor Y subunit B-5</fullName>
        <shortName>AtNF-YB-5</shortName>
    </recommendedName>
</protein>
<name>NFYB5_ARATH</name>
<proteinExistence type="evidence at protein level"/>
<feature type="chain" id="PRO_0000204619" description="Nuclear transcription factor Y subunit B-5">
    <location>
        <begin position="1"/>
        <end position="160"/>
    </location>
</feature>
<feature type="DNA-binding region" evidence="1">
    <location>
        <begin position="56"/>
        <end position="62"/>
    </location>
</feature>
<feature type="region of interest" description="Subunit association domain (SAD)" evidence="1">
    <location>
        <begin position="83"/>
        <end position="94"/>
    </location>
</feature>
<dbReference type="EMBL" id="AC005309">
    <property type="protein sequence ID" value="AAC63635.1"/>
    <property type="molecule type" value="Genomic_DNA"/>
</dbReference>
<dbReference type="EMBL" id="CP002685">
    <property type="protein sequence ID" value="AEC10890.1"/>
    <property type="molecule type" value="Genomic_DNA"/>
</dbReference>
<dbReference type="EMBL" id="BT003968">
    <property type="protein sequence ID" value="AAO42012.1"/>
    <property type="molecule type" value="mRNA"/>
</dbReference>
<dbReference type="EMBL" id="BT005081">
    <property type="protein sequence ID" value="AAO50614.1"/>
    <property type="molecule type" value="mRNA"/>
</dbReference>
<dbReference type="PIR" id="G84919">
    <property type="entry name" value="G84919"/>
</dbReference>
<dbReference type="RefSeq" id="NP_182302.1">
    <property type="nucleotide sequence ID" value="NM_130348.3"/>
</dbReference>
<dbReference type="SMR" id="O82248"/>
<dbReference type="BioGRID" id="4728">
    <property type="interactions" value="15"/>
</dbReference>
<dbReference type="FunCoup" id="O82248">
    <property type="interactions" value="321"/>
</dbReference>
<dbReference type="IntAct" id="O82248">
    <property type="interactions" value="12"/>
</dbReference>
<dbReference type="STRING" id="3702.O82248"/>
<dbReference type="PaxDb" id="3702-AT2G47810.1"/>
<dbReference type="ProteomicsDB" id="251111"/>
<dbReference type="EnsemblPlants" id="AT2G47810.1">
    <property type="protein sequence ID" value="AT2G47810.1"/>
    <property type="gene ID" value="AT2G47810"/>
</dbReference>
<dbReference type="GeneID" id="819393"/>
<dbReference type="Gramene" id="AT2G47810.1">
    <property type="protein sequence ID" value="AT2G47810.1"/>
    <property type="gene ID" value="AT2G47810"/>
</dbReference>
<dbReference type="KEGG" id="ath:AT2G47810"/>
<dbReference type="Araport" id="AT2G47810"/>
<dbReference type="TAIR" id="AT2G47810">
    <property type="gene designation" value="NF-YB5"/>
</dbReference>
<dbReference type="eggNOG" id="KOG0869">
    <property type="taxonomic scope" value="Eukaryota"/>
</dbReference>
<dbReference type="HOGENOM" id="CLU_066247_12_0_1"/>
<dbReference type="InParanoid" id="O82248"/>
<dbReference type="OMA" id="MQTDDAN"/>
<dbReference type="OrthoDB" id="386949at2759"/>
<dbReference type="PhylomeDB" id="O82248"/>
<dbReference type="PRO" id="PR:O82248"/>
<dbReference type="Proteomes" id="UP000006548">
    <property type="component" value="Chromosome 2"/>
</dbReference>
<dbReference type="ExpressionAtlas" id="O82248">
    <property type="expression patterns" value="baseline and differential"/>
</dbReference>
<dbReference type="GO" id="GO:0016602">
    <property type="term" value="C:CCAAT-binding factor complex"/>
    <property type="evidence" value="ECO:0007669"/>
    <property type="project" value="InterPro"/>
</dbReference>
<dbReference type="GO" id="GO:0001228">
    <property type="term" value="F:DNA-binding transcription activator activity, RNA polymerase II-specific"/>
    <property type="evidence" value="ECO:0007669"/>
    <property type="project" value="InterPro"/>
</dbReference>
<dbReference type="GO" id="GO:0003700">
    <property type="term" value="F:DNA-binding transcription factor activity"/>
    <property type="evidence" value="ECO:0000250"/>
    <property type="project" value="TAIR"/>
</dbReference>
<dbReference type="GO" id="GO:0046982">
    <property type="term" value="F:protein heterodimerization activity"/>
    <property type="evidence" value="ECO:0007669"/>
    <property type="project" value="InterPro"/>
</dbReference>
<dbReference type="GO" id="GO:0043565">
    <property type="term" value="F:sequence-specific DNA binding"/>
    <property type="evidence" value="ECO:0007669"/>
    <property type="project" value="InterPro"/>
</dbReference>
<dbReference type="CDD" id="cd22907">
    <property type="entry name" value="HFD_NFYB"/>
    <property type="match status" value="1"/>
</dbReference>
<dbReference type="FunFam" id="1.10.20.10:FF:000035">
    <property type="entry name" value="Nuclear transcription factor Y subunit B-3"/>
    <property type="match status" value="1"/>
</dbReference>
<dbReference type="Gene3D" id="1.10.20.10">
    <property type="entry name" value="Histone, subunit A"/>
    <property type="match status" value="1"/>
</dbReference>
<dbReference type="InterPro" id="IPR003958">
    <property type="entry name" value="CBFA_NFYB_domain"/>
</dbReference>
<dbReference type="InterPro" id="IPR009072">
    <property type="entry name" value="Histone-fold"/>
</dbReference>
<dbReference type="InterPro" id="IPR027113">
    <property type="entry name" value="Transc_fact_NFYB/HAP3"/>
</dbReference>
<dbReference type="InterPro" id="IPR003956">
    <property type="entry name" value="Transcrpt_fac_NFYB/HAP3_CS"/>
</dbReference>
<dbReference type="PANTHER" id="PTHR11064">
    <property type="entry name" value="CCAAT-BINDING TRANSCRIPTION FACTOR-RELATED"/>
    <property type="match status" value="1"/>
</dbReference>
<dbReference type="PANTHER" id="PTHR11064:SF106">
    <property type="entry name" value="NUCLEAR TRANSCRIPTION FACTOR Y SUBUNIT B-5"/>
    <property type="match status" value="1"/>
</dbReference>
<dbReference type="Pfam" id="PF00808">
    <property type="entry name" value="CBFD_NFYB_HMF"/>
    <property type="match status" value="1"/>
</dbReference>
<dbReference type="PRINTS" id="PR00615">
    <property type="entry name" value="CCAATSUBUNTA"/>
</dbReference>
<dbReference type="SUPFAM" id="SSF47113">
    <property type="entry name" value="Histone-fold"/>
    <property type="match status" value="1"/>
</dbReference>
<dbReference type="PROSITE" id="PS00685">
    <property type="entry name" value="NFYB_HAP3"/>
    <property type="match status" value="1"/>
</dbReference>
<evidence type="ECO:0000250" key="1"/>
<evidence type="ECO:0000269" key="2">
    <source>
    </source>
</evidence>
<evidence type="ECO:0000305" key="3"/>
<accession>O82248</accession>